<dbReference type="EMBL" id="BC077323">
    <property type="protein sequence ID" value="AAH77323.1"/>
    <property type="molecule type" value="mRNA"/>
</dbReference>
<dbReference type="RefSeq" id="NP_001086698.1">
    <property type="nucleotide sequence ID" value="NM_001093229.1"/>
</dbReference>
<dbReference type="DNASU" id="446533"/>
<dbReference type="GeneID" id="446533"/>
<dbReference type="KEGG" id="xla:446533"/>
<dbReference type="AGR" id="Xenbase:XB-GENE-5821178"/>
<dbReference type="CTD" id="446533"/>
<dbReference type="Xenbase" id="XB-GENE-5821178">
    <property type="gene designation" value="tmem167b.L"/>
</dbReference>
<dbReference type="OMA" id="IVMAFYI"/>
<dbReference type="OrthoDB" id="10034655at2759"/>
<dbReference type="Proteomes" id="UP000186698">
    <property type="component" value="Chromosome 2L"/>
</dbReference>
<dbReference type="Bgee" id="446533">
    <property type="expression patterns" value="Expressed in oocyte and 19 other cell types or tissues"/>
</dbReference>
<dbReference type="GO" id="GO:0000139">
    <property type="term" value="C:Golgi membrane"/>
    <property type="evidence" value="ECO:0007669"/>
    <property type="project" value="UniProtKB-SubCell"/>
</dbReference>
<dbReference type="InterPro" id="IPR042863">
    <property type="entry name" value="Kish-B"/>
</dbReference>
<dbReference type="InterPro" id="IPR009653">
    <property type="entry name" value="Ksh1"/>
</dbReference>
<dbReference type="PANTHER" id="PTHR46815">
    <property type="entry name" value="PROTEIN KISH-B"/>
    <property type="match status" value="1"/>
</dbReference>
<dbReference type="PANTHER" id="PTHR46815:SF1">
    <property type="entry name" value="PROTEIN KISH-B"/>
    <property type="match status" value="1"/>
</dbReference>
<dbReference type="Pfam" id="PF06842">
    <property type="entry name" value="DUF1242"/>
    <property type="match status" value="1"/>
</dbReference>
<gene>
    <name type="primary">tmem167b</name>
</gene>
<proteinExistence type="inferred from homology"/>
<feature type="signal peptide" evidence="2">
    <location>
        <begin position="1"/>
        <end position="22"/>
    </location>
</feature>
<feature type="chain" id="PRO_0000265085" description="Protein kish-B">
    <location>
        <begin position="23"/>
        <end position="74"/>
    </location>
</feature>
<feature type="topological domain" description="Extracellular" evidence="2">
    <location>
        <begin position="23"/>
        <end position="52"/>
    </location>
</feature>
<feature type="transmembrane region" description="Helical" evidence="2">
    <location>
        <begin position="53"/>
        <end position="73"/>
    </location>
</feature>
<feature type="topological domain" description="Cytoplasmic" evidence="2">
    <location>
        <position position="74"/>
    </location>
</feature>
<protein>
    <recommendedName>
        <fullName>Protein kish-B</fullName>
    </recommendedName>
    <alternativeName>
        <fullName>Transmembrane protein 167B</fullName>
    </alternativeName>
</protein>
<organism>
    <name type="scientific">Xenopus laevis</name>
    <name type="common">African clawed frog</name>
    <dbReference type="NCBI Taxonomy" id="8355"/>
    <lineage>
        <taxon>Eukaryota</taxon>
        <taxon>Metazoa</taxon>
        <taxon>Chordata</taxon>
        <taxon>Craniata</taxon>
        <taxon>Vertebrata</taxon>
        <taxon>Euteleostomi</taxon>
        <taxon>Amphibia</taxon>
        <taxon>Batrachia</taxon>
        <taxon>Anura</taxon>
        <taxon>Pipoidea</taxon>
        <taxon>Pipidae</taxon>
        <taxon>Xenopodinae</taxon>
        <taxon>Xenopus</taxon>
        <taxon>Xenopus</taxon>
    </lineage>
</organism>
<reference key="1">
    <citation type="submission" date="2004-07" db="EMBL/GenBank/DDBJ databases">
        <authorList>
            <consortium name="NIH - Xenopus Gene Collection (XGC) project"/>
        </authorList>
    </citation>
    <scope>NUCLEOTIDE SEQUENCE [LARGE SCALE MRNA]</scope>
    <source>
        <tissue>Ovary</tissue>
    </source>
</reference>
<name>KISHB_XENLA</name>
<sequence>MTNVYSLDGLLVFALLFVCTCAYFRKVPRLRSWLLSEKKGVWGVFYKAAVIGSRLHLAVSISCIAMAFYVLFIK</sequence>
<evidence type="ECO:0000250" key="1"/>
<evidence type="ECO:0000255" key="2"/>
<evidence type="ECO:0000305" key="3"/>
<comment type="function">
    <text evidence="1">Involved in the early part of the secretory pathway.</text>
</comment>
<comment type="subcellular location">
    <subcellularLocation>
        <location evidence="1">Golgi apparatus membrane</location>
        <topology evidence="1">Single-pass type I membrane protein</topology>
    </subcellularLocation>
</comment>
<comment type="similarity">
    <text evidence="3">Belongs to the KISH family.</text>
</comment>
<keyword id="KW-0333">Golgi apparatus</keyword>
<keyword id="KW-0472">Membrane</keyword>
<keyword id="KW-1185">Reference proteome</keyword>
<keyword id="KW-0732">Signal</keyword>
<keyword id="KW-0812">Transmembrane</keyword>
<keyword id="KW-1133">Transmembrane helix</keyword>
<accession>Q6DE23</accession>